<sequence>MATTILAFDFGTYSIGCAVGQSITKTAQSLTAFKSQDGIPNWQHIEKIIKEWQPDLLVVGLPLNMDGSEQPLTQRARKFANRLNGRFNLPVALQDERLTTTEAKSEIFSRGGYKALKKDKIDTISACLILESWFDNNP</sequence>
<keyword id="KW-0963">Cytoplasm</keyword>
<keyword id="KW-0378">Hydrolase</keyword>
<keyword id="KW-0540">Nuclease</keyword>
<keyword id="KW-1185">Reference proteome</keyword>
<keyword id="KW-0690">Ribosome biogenesis</keyword>
<evidence type="ECO:0000255" key="1">
    <source>
        <dbReference type="HAMAP-Rule" id="MF_00651"/>
    </source>
</evidence>
<organism>
    <name type="scientific">Haemophilus ducreyi (strain 35000HP / ATCC 700724)</name>
    <dbReference type="NCBI Taxonomy" id="233412"/>
    <lineage>
        <taxon>Bacteria</taxon>
        <taxon>Pseudomonadati</taxon>
        <taxon>Pseudomonadota</taxon>
        <taxon>Gammaproteobacteria</taxon>
        <taxon>Pasteurellales</taxon>
        <taxon>Pasteurellaceae</taxon>
        <taxon>Haemophilus</taxon>
    </lineage>
</organism>
<proteinExistence type="inferred from homology"/>
<dbReference type="EC" id="3.1.-.-" evidence="1"/>
<dbReference type="EMBL" id="AE017143">
    <property type="protein sequence ID" value="AAP96546.1"/>
    <property type="molecule type" value="Genomic_DNA"/>
</dbReference>
<dbReference type="RefSeq" id="WP_010945575.1">
    <property type="nucleotide sequence ID" value="NC_002940.2"/>
</dbReference>
<dbReference type="SMR" id="Q7VKS6"/>
<dbReference type="STRING" id="233412.HD_1795"/>
<dbReference type="KEGG" id="hdu:HD_1795"/>
<dbReference type="eggNOG" id="COG0816">
    <property type="taxonomic scope" value="Bacteria"/>
</dbReference>
<dbReference type="HOGENOM" id="CLU_098240_3_0_6"/>
<dbReference type="OrthoDB" id="9796140at2"/>
<dbReference type="Proteomes" id="UP000001022">
    <property type="component" value="Chromosome"/>
</dbReference>
<dbReference type="GO" id="GO:0005829">
    <property type="term" value="C:cytosol"/>
    <property type="evidence" value="ECO:0007669"/>
    <property type="project" value="TreeGrafter"/>
</dbReference>
<dbReference type="GO" id="GO:0004518">
    <property type="term" value="F:nuclease activity"/>
    <property type="evidence" value="ECO:0007669"/>
    <property type="project" value="UniProtKB-KW"/>
</dbReference>
<dbReference type="GO" id="GO:0000967">
    <property type="term" value="P:rRNA 5'-end processing"/>
    <property type="evidence" value="ECO:0007669"/>
    <property type="project" value="UniProtKB-UniRule"/>
</dbReference>
<dbReference type="CDD" id="cd16964">
    <property type="entry name" value="YqgF"/>
    <property type="match status" value="1"/>
</dbReference>
<dbReference type="FunFam" id="3.30.420.140:FF:000002">
    <property type="entry name" value="Putative pre-16S rRNA nuclease"/>
    <property type="match status" value="1"/>
</dbReference>
<dbReference type="Gene3D" id="3.30.420.140">
    <property type="entry name" value="YqgF/RNase H-like domain"/>
    <property type="match status" value="1"/>
</dbReference>
<dbReference type="HAMAP" id="MF_00651">
    <property type="entry name" value="Nuclease_YqgF"/>
    <property type="match status" value="1"/>
</dbReference>
<dbReference type="InterPro" id="IPR012337">
    <property type="entry name" value="RNaseH-like_sf"/>
</dbReference>
<dbReference type="InterPro" id="IPR005227">
    <property type="entry name" value="YqgF"/>
</dbReference>
<dbReference type="InterPro" id="IPR006641">
    <property type="entry name" value="YqgF/RNaseH-like_dom"/>
</dbReference>
<dbReference type="InterPro" id="IPR037027">
    <property type="entry name" value="YqgF/RNaseH-like_dom_sf"/>
</dbReference>
<dbReference type="NCBIfam" id="TIGR00250">
    <property type="entry name" value="RNAse_H_YqgF"/>
    <property type="match status" value="1"/>
</dbReference>
<dbReference type="PANTHER" id="PTHR33317">
    <property type="entry name" value="POLYNUCLEOTIDYL TRANSFERASE, RIBONUCLEASE H-LIKE SUPERFAMILY PROTEIN"/>
    <property type="match status" value="1"/>
</dbReference>
<dbReference type="PANTHER" id="PTHR33317:SF4">
    <property type="entry name" value="POLYNUCLEOTIDYL TRANSFERASE, RIBONUCLEASE H-LIKE SUPERFAMILY PROTEIN"/>
    <property type="match status" value="1"/>
</dbReference>
<dbReference type="Pfam" id="PF03652">
    <property type="entry name" value="RuvX"/>
    <property type="match status" value="1"/>
</dbReference>
<dbReference type="SMART" id="SM00732">
    <property type="entry name" value="YqgFc"/>
    <property type="match status" value="1"/>
</dbReference>
<dbReference type="SUPFAM" id="SSF53098">
    <property type="entry name" value="Ribonuclease H-like"/>
    <property type="match status" value="1"/>
</dbReference>
<reference key="1">
    <citation type="submission" date="2003-06" db="EMBL/GenBank/DDBJ databases">
        <title>The complete genome sequence of Haemophilus ducreyi.</title>
        <authorList>
            <person name="Munson R.S. Jr."/>
            <person name="Ray W.C."/>
            <person name="Mahairas G."/>
            <person name="Sabo P."/>
            <person name="Mungur R."/>
            <person name="Johnson L."/>
            <person name="Nguyen D."/>
            <person name="Wang J."/>
            <person name="Forst C."/>
            <person name="Hood L."/>
        </authorList>
    </citation>
    <scope>NUCLEOTIDE SEQUENCE [LARGE SCALE GENOMIC DNA]</scope>
    <source>
        <strain>35000HP / ATCC 700724</strain>
    </source>
</reference>
<protein>
    <recommendedName>
        <fullName evidence="1">Putative pre-16S rRNA nuclease</fullName>
        <ecNumber evidence="1">3.1.-.-</ecNumber>
    </recommendedName>
</protein>
<gene>
    <name type="ordered locus">HD_1795</name>
</gene>
<feature type="chain" id="PRO_0000172070" description="Putative pre-16S rRNA nuclease">
    <location>
        <begin position="1"/>
        <end position="138"/>
    </location>
</feature>
<comment type="function">
    <text evidence="1">Could be a nuclease involved in processing of the 5'-end of pre-16S rRNA.</text>
</comment>
<comment type="subcellular location">
    <subcellularLocation>
        <location evidence="1">Cytoplasm</location>
    </subcellularLocation>
</comment>
<comment type="similarity">
    <text evidence="1">Belongs to the YqgF nuclease family.</text>
</comment>
<accession>Q7VKS6</accession>
<name>YQGF_HAEDU</name>